<keyword id="KW-0020">Allergen</keyword>
<keyword id="KW-0903">Direct protein sequencing</keyword>
<keyword id="KW-1185">Reference proteome</keyword>
<keyword id="KW-0964">Secreted</keyword>
<dbReference type="SMR" id="P81496"/>
<dbReference type="STRING" id="4565.P81496"/>
<dbReference type="Allergome" id="11042">
    <property type="allergen name" value="Tri a CMX"/>
</dbReference>
<dbReference type="Proteomes" id="UP000019116">
    <property type="component" value="Unplaced"/>
</dbReference>
<dbReference type="GO" id="GO:0005576">
    <property type="term" value="C:extracellular region"/>
    <property type="evidence" value="ECO:0007669"/>
    <property type="project" value="UniProtKB-SubCell"/>
</dbReference>
<evidence type="ECO:0000305" key="1"/>
<proteinExistence type="evidence at protein level"/>
<protein>
    <recommendedName>
        <fullName>Allergen C-C</fullName>
    </recommendedName>
</protein>
<organism>
    <name type="scientific">Triticum aestivum</name>
    <name type="common">Wheat</name>
    <dbReference type="NCBI Taxonomy" id="4565"/>
    <lineage>
        <taxon>Eukaryota</taxon>
        <taxon>Viridiplantae</taxon>
        <taxon>Streptophyta</taxon>
        <taxon>Embryophyta</taxon>
        <taxon>Tracheophyta</taxon>
        <taxon>Spermatophyta</taxon>
        <taxon>Magnoliopsida</taxon>
        <taxon>Liliopsida</taxon>
        <taxon>Poales</taxon>
        <taxon>Poaceae</taxon>
        <taxon>BOP clade</taxon>
        <taxon>Pooideae</taxon>
        <taxon>Triticodae</taxon>
        <taxon>Triticeae</taxon>
        <taxon>Triticinae</taxon>
        <taxon>Triticum</taxon>
    </lineage>
</organism>
<sequence>SFREQCVPGREITYECLNACAEYAVRQ</sequence>
<comment type="subcellular location">
    <subcellularLocation>
        <location>Secreted</location>
    </subcellularLocation>
</comment>
<comment type="allergen">
    <text>Causes an allergic reaction in human. Major allergen of wheat flour responsible for baker's asthma.</text>
</comment>
<comment type="similarity">
    <text evidence="1">Belongs to the protease inhibitor I6 (cereal trypsin/alpha-amylase inhibitor) family.</text>
</comment>
<accession>P81496</accession>
<feature type="chain" id="PRO_0000070489" description="Allergen C-C">
    <location>
        <begin position="1"/>
        <end position="27" status="greater than"/>
    </location>
</feature>
<feature type="non-terminal residue">
    <location>
        <position position="27"/>
    </location>
</feature>
<name>ALCC_WHEAT</name>
<reference key="1">
    <citation type="journal article" date="1998" name="Biochem. J.">
        <title>Identification of the major allergens in wheat flour responsible for baker's asthma.</title>
        <authorList>
            <person name="Amano M."/>
            <person name="Ogawa H."/>
            <person name="Kojima K."/>
            <person name="Kamidaira T."/>
            <person name="Suetsugu S."/>
            <person name="Yoshihama M."/>
            <person name="Satoh T."/>
            <person name="Samejima T."/>
            <person name="Matsumoto I."/>
        </authorList>
    </citation>
    <scope>PROTEIN SEQUENCE</scope>
</reference>